<accession>Q9WWP1</accession>
<comment type="function">
    <text>Stabilizes the interaction between PsaC and the PSI core, assists the docking of the ferredoxin to PSI and interacts with ferredoxin-NADP oxidoreductase.</text>
</comment>
<comment type="subcellular location">
    <subcellularLocation>
        <location>Cellular thylakoid membrane</location>
        <topology>Peripheral membrane protein</topology>
    </subcellularLocation>
</comment>
<comment type="similarity">
    <text evidence="1">Belongs to the PsaE family.</text>
</comment>
<reference key="1">
    <citation type="submission" date="1999-05" db="EMBL/GenBank/DDBJ databases">
        <title>Nucleotide sequence of the psaE gene of Nostoc PCC8009.</title>
        <authorList>
            <person name="Rhiel E."/>
            <person name="Bryant D.A."/>
        </authorList>
    </citation>
    <scope>NUCLEOTIDE SEQUENCE [GENOMIC DNA]</scope>
</reference>
<reference key="2">
    <citation type="journal article" date="1999" name="Biochemistry">
        <title>The solution structure of photosystem I accessory protein E from the cyanobacterium Nostoc sp. strain PCC 8009.</title>
        <authorList>
            <person name="Mayer K.L."/>
            <person name="Shen G."/>
            <person name="Bryant D.A."/>
            <person name="Lecomte J.T.J."/>
            <person name="Falzone C.J."/>
        </authorList>
    </citation>
    <scope>STRUCTURE BY NMR</scope>
</reference>
<keyword id="KW-0002">3D-structure</keyword>
<keyword id="KW-0472">Membrane</keyword>
<keyword id="KW-0602">Photosynthesis</keyword>
<keyword id="KW-0603">Photosystem I</keyword>
<keyword id="KW-0793">Thylakoid</keyword>
<dbReference type="EMBL" id="AF148219">
    <property type="protein sequence ID" value="AAD38024.1"/>
    <property type="molecule type" value="Genomic_DNA"/>
</dbReference>
<dbReference type="PDB" id="1QP2">
    <property type="method" value="NMR"/>
    <property type="chains" value="A=1-70"/>
</dbReference>
<dbReference type="PDB" id="1QP3">
    <property type="method" value="NMR"/>
    <property type="chains" value="A=1-70"/>
</dbReference>
<dbReference type="PDBsum" id="1QP2"/>
<dbReference type="PDBsum" id="1QP3"/>
<dbReference type="SMR" id="Q9WWP1"/>
<dbReference type="EvolutionaryTrace" id="Q9WWP1"/>
<dbReference type="GO" id="GO:0009538">
    <property type="term" value="C:photosystem I reaction center"/>
    <property type="evidence" value="ECO:0007669"/>
    <property type="project" value="InterPro"/>
</dbReference>
<dbReference type="GO" id="GO:0031676">
    <property type="term" value="C:plasma membrane-derived thylakoid membrane"/>
    <property type="evidence" value="ECO:0007669"/>
    <property type="project" value="UniProtKB-SubCell"/>
</dbReference>
<dbReference type="GO" id="GO:0015979">
    <property type="term" value="P:photosynthesis"/>
    <property type="evidence" value="ECO:0007669"/>
    <property type="project" value="UniProtKB-UniRule"/>
</dbReference>
<dbReference type="Gene3D" id="2.30.30.50">
    <property type="match status" value="1"/>
</dbReference>
<dbReference type="HAMAP" id="MF_00613">
    <property type="entry name" value="PSI_PsaE"/>
    <property type="match status" value="1"/>
</dbReference>
<dbReference type="InterPro" id="IPR008990">
    <property type="entry name" value="Elect_transpt_acc-like_dom_sf"/>
</dbReference>
<dbReference type="InterPro" id="IPR003375">
    <property type="entry name" value="PSI_PsaE"/>
</dbReference>
<dbReference type="NCBIfam" id="NF002745">
    <property type="entry name" value="PRK02749.1"/>
    <property type="match status" value="1"/>
</dbReference>
<dbReference type="PANTHER" id="PTHR34549">
    <property type="entry name" value="PHOTOSYSTEM I REACTION CENTER SUBUNIT IV A, CHLOROPLASTIC-RELATED"/>
    <property type="match status" value="1"/>
</dbReference>
<dbReference type="PANTHER" id="PTHR34549:SF2">
    <property type="entry name" value="PHOTOSYSTEM I SUBUNIT IV"/>
    <property type="match status" value="1"/>
</dbReference>
<dbReference type="Pfam" id="PF02427">
    <property type="entry name" value="PSI_PsaE"/>
    <property type="match status" value="1"/>
</dbReference>
<dbReference type="SUPFAM" id="SSF50090">
    <property type="entry name" value="Electron transport accessory proteins"/>
    <property type="match status" value="1"/>
</dbReference>
<organism>
    <name type="scientific">Nostoc sp. (strain PCC 8009)</name>
    <dbReference type="NCBI Taxonomy" id="29413"/>
    <lineage>
        <taxon>Bacteria</taxon>
        <taxon>Bacillati</taxon>
        <taxon>Cyanobacteriota</taxon>
        <taxon>Cyanophyceae</taxon>
        <taxon>Nostocales</taxon>
        <taxon>Nostocaceae</taxon>
        <taxon>Nostoc</taxon>
    </lineage>
</organism>
<protein>
    <recommendedName>
        <fullName>Photosystem I reaction center subunit IV</fullName>
    </recommendedName>
</protein>
<feature type="chain" id="PRO_0000204407" description="Photosystem I reaction center subunit IV">
    <location>
        <begin position="1"/>
        <end position="70"/>
    </location>
</feature>
<feature type="strand" evidence="2">
    <location>
        <begin position="7"/>
        <end position="10"/>
    </location>
</feature>
<feature type="turn" evidence="2">
    <location>
        <begin position="16"/>
        <end position="19"/>
    </location>
</feature>
<feature type="strand" evidence="2">
    <location>
        <begin position="21"/>
        <end position="27"/>
    </location>
</feature>
<feature type="strand" evidence="2">
    <location>
        <begin position="35"/>
        <end position="39"/>
    </location>
</feature>
<feature type="strand" evidence="2">
    <location>
        <begin position="49"/>
        <end position="53"/>
    </location>
</feature>
<feature type="helix" evidence="2">
    <location>
        <begin position="55"/>
        <end position="57"/>
    </location>
</feature>
<feature type="strand" evidence="2">
    <location>
        <begin position="58"/>
        <end position="60"/>
    </location>
</feature>
<gene>
    <name type="primary">psaE</name>
</gene>
<name>PSAE_NOSS8</name>
<proteinExistence type="evidence at protein level"/>
<sequence length="70" mass="7958">MVQRGSKVRILRPESYWFQDVGTVASVDQSGIKYPVIVRFEKVNYSGINTNNFAEDELVEVEAPKAKPKK</sequence>
<evidence type="ECO:0000305" key="1"/>
<evidence type="ECO:0007829" key="2">
    <source>
        <dbReference type="PDB" id="1QP2"/>
    </source>
</evidence>